<name>MIH_CARMA</name>
<gene>
    <name type="primary">MIH</name>
</gene>
<proteinExistence type="evidence at protein level"/>
<comment type="function">
    <text>Inhibits Y-organs where molting hormone (ecdysteroid) is secreted. A molting cycle is initiated when MIH secretion diminishes or stops.</text>
</comment>
<comment type="subcellular location">
    <subcellularLocation>
        <location>Secreted</location>
    </subcellularLocation>
</comment>
<comment type="similarity">
    <text evidence="3">Belongs to the arthropod CHH/MIH/GIH/VIH hormone family.</text>
</comment>
<organism>
    <name type="scientific">Carcinus maenas</name>
    <name type="common">Common shore crab</name>
    <name type="synonym">Green crab</name>
    <dbReference type="NCBI Taxonomy" id="6759"/>
    <lineage>
        <taxon>Eukaryota</taxon>
        <taxon>Metazoa</taxon>
        <taxon>Ecdysozoa</taxon>
        <taxon>Arthropoda</taxon>
        <taxon>Crustacea</taxon>
        <taxon>Multicrustacea</taxon>
        <taxon>Malacostraca</taxon>
        <taxon>Eumalacostraca</taxon>
        <taxon>Eucarida</taxon>
        <taxon>Decapoda</taxon>
        <taxon>Pleocyemata</taxon>
        <taxon>Brachyura</taxon>
        <taxon>Eubrachyura</taxon>
        <taxon>Portunoidea</taxon>
        <taxon>Carcinidae</taxon>
        <taxon>Carcinus</taxon>
    </lineage>
</organism>
<sequence length="113" mass="13092">MMSRANSRFSCQRTWLLSVVVLAALWSFGVHRAAARVINDECPNLIGNRDLYKKVEWICEDCSNIFRKTGMASLCRRNCFFNEDFVWCVHATERSEELRDLEEWVGILGAGRD</sequence>
<evidence type="ECO:0000250" key="1"/>
<evidence type="ECO:0000255" key="2"/>
<evidence type="ECO:0000305" key="3"/>
<dbReference type="EMBL" id="X75995">
    <property type="protein sequence ID" value="CAA53591.1"/>
    <property type="molecule type" value="mRNA"/>
</dbReference>
<dbReference type="PIR" id="S39031">
    <property type="entry name" value="S39031"/>
</dbReference>
<dbReference type="SMR" id="Q27225"/>
<dbReference type="GO" id="GO:0005576">
    <property type="term" value="C:extracellular region"/>
    <property type="evidence" value="ECO:0007669"/>
    <property type="project" value="UniProtKB-SubCell"/>
</dbReference>
<dbReference type="GO" id="GO:0005184">
    <property type="term" value="F:neuropeptide hormone activity"/>
    <property type="evidence" value="ECO:0007669"/>
    <property type="project" value="InterPro"/>
</dbReference>
<dbReference type="GO" id="GO:0007623">
    <property type="term" value="P:circadian rhythm"/>
    <property type="evidence" value="ECO:0007669"/>
    <property type="project" value="TreeGrafter"/>
</dbReference>
<dbReference type="GO" id="GO:0007218">
    <property type="term" value="P:neuropeptide signaling pathway"/>
    <property type="evidence" value="ECO:0007669"/>
    <property type="project" value="UniProtKB-KW"/>
</dbReference>
<dbReference type="Gene3D" id="1.10.2010.10">
    <property type="entry name" value="Crustacean CHH/MIH/GIH neurohormone"/>
    <property type="match status" value="1"/>
</dbReference>
<dbReference type="InterPro" id="IPR018251">
    <property type="entry name" value="Crust_neurhormone_CS"/>
</dbReference>
<dbReference type="InterPro" id="IPR031098">
    <property type="entry name" value="Crust_neurohorm"/>
</dbReference>
<dbReference type="InterPro" id="IPR035957">
    <property type="entry name" value="Crust_neurohorm_sf"/>
</dbReference>
<dbReference type="InterPro" id="IPR001166">
    <property type="entry name" value="Hyperglycemic"/>
</dbReference>
<dbReference type="InterPro" id="IPR001262">
    <property type="entry name" value="Hyperglycemic2"/>
</dbReference>
<dbReference type="PANTHER" id="PTHR35981">
    <property type="entry name" value="ION TRANSPORT PEPTIDE, ISOFORM C"/>
    <property type="match status" value="1"/>
</dbReference>
<dbReference type="PANTHER" id="PTHR35981:SF2">
    <property type="entry name" value="ION TRANSPORT PEPTIDE, ISOFORM C"/>
    <property type="match status" value="1"/>
</dbReference>
<dbReference type="Pfam" id="PF01147">
    <property type="entry name" value="Crust_neurohorm"/>
    <property type="match status" value="1"/>
</dbReference>
<dbReference type="PRINTS" id="PR00549">
    <property type="entry name" value="HYPRGLYCEMC2"/>
</dbReference>
<dbReference type="PRINTS" id="PR00550">
    <property type="entry name" value="HYPRGLYCEMIC"/>
</dbReference>
<dbReference type="SUPFAM" id="SSF81778">
    <property type="entry name" value="Crustacean CHH/MIH/GIH neurohormone"/>
    <property type="match status" value="1"/>
</dbReference>
<dbReference type="PROSITE" id="PS01250">
    <property type="entry name" value="CHH_MIH_GIH"/>
    <property type="match status" value="1"/>
</dbReference>
<feature type="signal peptide" evidence="2">
    <location>
        <begin position="1"/>
        <end position="35"/>
    </location>
</feature>
<feature type="peptide" id="PRO_0000019078" description="Molt-inhibiting hormone">
    <location>
        <begin position="36"/>
        <end position="113"/>
    </location>
</feature>
<feature type="disulfide bond">
    <location>
        <begin position="42"/>
        <end position="79"/>
    </location>
</feature>
<feature type="disulfide bond" evidence="1">
    <location>
        <begin position="59"/>
        <end position="75"/>
    </location>
</feature>
<feature type="disulfide bond" evidence="1">
    <location>
        <begin position="62"/>
        <end position="88"/>
    </location>
</feature>
<reference key="1">
    <citation type="journal article" date="1993" name="FEBS Lett.">
        <title>Molecular cloning of crustacean putative molt-inhibiting hormone (MIH) precursor.</title>
        <authorList>
            <person name="Klein J.M."/>
            <person name="Mangerich S."/>
            <person name="de Kleijn D.P.V."/>
            <person name="Keller R."/>
            <person name="Weidemann W.M."/>
        </authorList>
    </citation>
    <scope>NUCLEOTIDE SEQUENCE [MRNA]</scope>
    <source>
        <tissue>Eyestalk</tissue>
    </source>
</reference>
<reference key="2">
    <citation type="journal article" date="1991" name="Proc. R. Soc. B">
        <title>Amino acid sequence of putative moult-inhibiting hormone from the crab Carcinus maenas.</title>
        <authorList>
            <person name="Webster S.G."/>
        </authorList>
    </citation>
    <scope>PROTEIN SEQUENCE OF 36-113</scope>
    <source>
        <tissue>Sinus gland</tissue>
    </source>
</reference>
<protein>
    <recommendedName>
        <fullName>Molt-inhibiting hormone</fullName>
        <shortName>MIH</shortName>
    </recommendedName>
</protein>
<accession>Q27225</accession>
<keyword id="KW-0903">Direct protein sequencing</keyword>
<keyword id="KW-1015">Disulfide bond</keyword>
<keyword id="KW-0372">Hormone</keyword>
<keyword id="KW-0527">Neuropeptide</keyword>
<keyword id="KW-0964">Secreted</keyword>
<keyword id="KW-0732">Signal</keyword>